<organism>
    <name type="scientific">Drosophila melanogaster</name>
    <name type="common">Fruit fly</name>
    <dbReference type="NCBI Taxonomy" id="7227"/>
    <lineage>
        <taxon>Eukaryota</taxon>
        <taxon>Metazoa</taxon>
        <taxon>Ecdysozoa</taxon>
        <taxon>Arthropoda</taxon>
        <taxon>Hexapoda</taxon>
        <taxon>Insecta</taxon>
        <taxon>Pterygota</taxon>
        <taxon>Neoptera</taxon>
        <taxon>Endopterygota</taxon>
        <taxon>Diptera</taxon>
        <taxon>Brachycera</taxon>
        <taxon>Muscomorpha</taxon>
        <taxon>Ephydroidea</taxon>
        <taxon>Drosophilidae</taxon>
        <taxon>Drosophila</taxon>
        <taxon>Sophophora</taxon>
    </lineage>
</organism>
<name>EI3D2_DROME</name>
<keyword id="KW-0963">Cytoplasm</keyword>
<keyword id="KW-0396">Initiation factor</keyword>
<keyword id="KW-0648">Protein biosynthesis</keyword>
<keyword id="KW-1185">Reference proteome</keyword>
<keyword id="KW-0694">RNA-binding</keyword>
<proteinExistence type="evidence at transcript level"/>
<accession>Q9VGC7</accession>
<evidence type="ECO:0000250" key="1">
    <source>
        <dbReference type="UniProtKB" id="K7IM66"/>
    </source>
</evidence>
<evidence type="ECO:0000255" key="2">
    <source>
        <dbReference type="HAMAP-Rule" id="MF_03003"/>
    </source>
</evidence>
<evidence type="ECO:0000256" key="3">
    <source>
        <dbReference type="SAM" id="MobiDB-lite"/>
    </source>
</evidence>
<evidence type="ECO:0000312" key="4">
    <source>
        <dbReference type="FlyBase" id="FBgn0037994"/>
    </source>
</evidence>
<feature type="chain" id="PRO_0000364149" description="Eukaryotic translation initiation factor 3 subunit D-2">
    <location>
        <begin position="1"/>
        <end position="551"/>
    </location>
</feature>
<feature type="region of interest" description="Disordered" evidence="3">
    <location>
        <begin position="91"/>
        <end position="154"/>
    </location>
</feature>
<feature type="region of interest" description="RNA gate" evidence="1">
    <location>
        <begin position="290"/>
        <end position="304"/>
    </location>
</feature>
<feature type="region of interest" description="Disordered" evidence="3">
    <location>
        <begin position="527"/>
        <end position="551"/>
    </location>
</feature>
<feature type="compositionally biased region" description="Basic residues" evidence="3">
    <location>
        <begin position="95"/>
        <end position="113"/>
    </location>
</feature>
<feature type="compositionally biased region" description="Low complexity" evidence="3">
    <location>
        <begin position="121"/>
        <end position="136"/>
    </location>
</feature>
<feature type="compositionally biased region" description="Acidic residues" evidence="3">
    <location>
        <begin position="531"/>
        <end position="542"/>
    </location>
</feature>
<comment type="function">
    <text evidence="2">mRNA cap-binding component of the eukaryotic translation initiation factor 3 (eIF-3) complex, which is involved in protein synthesis of a specialized repertoire of mRNAs and, together with other initiation factors, stimulates binding of mRNA and methionyl-tRNAi to the 40S ribosome. The eIF-3 complex specifically targets and initiates translation of a subset of mRNAs involved in cell proliferation. In the eIF-3 complex, eif3d specifically recognizes and binds the 7-methylguanosine cap of a subset of mRNAs.</text>
</comment>
<comment type="subunit">
    <text evidence="2">Component of the eukaryotic translation initiation factor 3 (eIF-3) complex. The eIF-3 complex interacts with pix.</text>
</comment>
<comment type="subcellular location">
    <subcellularLocation>
        <location evidence="2">Cytoplasm</location>
    </subcellularLocation>
</comment>
<comment type="domain">
    <text evidence="2">The RNA gate region regulates mRNA cap recognition to prevent promiscuous mRNA-binding before assembly of eif3d into the full eukaryotic translation initiation factor 3 (eIF-3) complex.</text>
</comment>
<comment type="similarity">
    <text evidence="2">Belongs to the eIF-3 subunit D family.</text>
</comment>
<dbReference type="EMBL" id="AE014297">
    <property type="protein sequence ID" value="AAF54756.1"/>
    <property type="molecule type" value="Genomic_DNA"/>
</dbReference>
<dbReference type="EMBL" id="AY119516">
    <property type="protein sequence ID" value="AAM50170.1"/>
    <property type="molecule type" value="mRNA"/>
</dbReference>
<dbReference type="RefSeq" id="NP_731675.1">
    <property type="nucleotide sequence ID" value="NM_169456.1"/>
</dbReference>
<dbReference type="SMR" id="Q9VGC7"/>
<dbReference type="BioGRID" id="66589">
    <property type="interactions" value="9"/>
</dbReference>
<dbReference type="FunCoup" id="Q9VGC7">
    <property type="interactions" value="1882"/>
</dbReference>
<dbReference type="IntAct" id="Q9VGC7">
    <property type="interactions" value="9"/>
</dbReference>
<dbReference type="STRING" id="7227.FBpp0082019"/>
<dbReference type="PaxDb" id="7227-FBpp0082019"/>
<dbReference type="DNASU" id="41475"/>
<dbReference type="EnsemblMetazoa" id="FBtr0082546">
    <property type="protein sequence ID" value="FBpp0082019"/>
    <property type="gene ID" value="FBgn0037994"/>
</dbReference>
<dbReference type="GeneID" id="41475"/>
<dbReference type="KEGG" id="dme:Dmel_CG4810"/>
<dbReference type="UCSC" id="CG4810-RA">
    <property type="organism name" value="d. melanogaster"/>
</dbReference>
<dbReference type="AGR" id="FB:FBgn0037994"/>
<dbReference type="CTD" id="41475"/>
<dbReference type="FlyBase" id="FBgn0037994">
    <property type="gene designation" value="eIF3d2"/>
</dbReference>
<dbReference type="VEuPathDB" id="VectorBase:FBgn0037994"/>
<dbReference type="eggNOG" id="KOG2479">
    <property type="taxonomic scope" value="Eukaryota"/>
</dbReference>
<dbReference type="GeneTree" id="ENSGT00390000002667"/>
<dbReference type="HOGENOM" id="CLU_024521_2_0_1"/>
<dbReference type="InParanoid" id="Q9VGC7"/>
<dbReference type="OMA" id="CKHNGVI"/>
<dbReference type="OrthoDB" id="16538at2759"/>
<dbReference type="PhylomeDB" id="Q9VGC7"/>
<dbReference type="SignaLink" id="Q9VGC7"/>
<dbReference type="BioGRID-ORCS" id="41475">
    <property type="hits" value="0 hits in 1 CRISPR screen"/>
</dbReference>
<dbReference type="GenomeRNAi" id="41475"/>
<dbReference type="PRO" id="PR:Q9VGC7"/>
<dbReference type="Proteomes" id="UP000000803">
    <property type="component" value="Chromosome 3R"/>
</dbReference>
<dbReference type="Bgee" id="FBgn0037994">
    <property type="expression patterns" value="Expressed in early elongation stage spermatid (Drosophila) in testis and 21 other cell types or tissues"/>
</dbReference>
<dbReference type="GO" id="GO:0016282">
    <property type="term" value="C:eukaryotic 43S preinitiation complex"/>
    <property type="evidence" value="ECO:0007669"/>
    <property type="project" value="UniProtKB-UniRule"/>
</dbReference>
<dbReference type="GO" id="GO:0033290">
    <property type="term" value="C:eukaryotic 48S preinitiation complex"/>
    <property type="evidence" value="ECO:0007669"/>
    <property type="project" value="UniProtKB-UniRule"/>
</dbReference>
<dbReference type="GO" id="GO:0005852">
    <property type="term" value="C:eukaryotic translation initiation factor 3 complex"/>
    <property type="evidence" value="ECO:0000250"/>
    <property type="project" value="UniProtKB"/>
</dbReference>
<dbReference type="GO" id="GO:0098808">
    <property type="term" value="F:mRNA cap binding"/>
    <property type="evidence" value="ECO:0007669"/>
    <property type="project" value="UniProtKB-UniRule"/>
</dbReference>
<dbReference type="GO" id="GO:0003743">
    <property type="term" value="F:translation initiation factor activity"/>
    <property type="evidence" value="ECO:0000250"/>
    <property type="project" value="UniProtKB"/>
</dbReference>
<dbReference type="GO" id="GO:0002191">
    <property type="term" value="P:cap-dependent translational initiation"/>
    <property type="evidence" value="ECO:0007669"/>
    <property type="project" value="UniProtKB-UniRule"/>
</dbReference>
<dbReference type="GO" id="GO:0001732">
    <property type="term" value="P:formation of cytoplasmic translation initiation complex"/>
    <property type="evidence" value="ECO:0007669"/>
    <property type="project" value="UniProtKB-UniRule"/>
</dbReference>
<dbReference type="GO" id="GO:0006446">
    <property type="term" value="P:regulation of translational initiation"/>
    <property type="evidence" value="ECO:0000250"/>
    <property type="project" value="UniProtKB"/>
</dbReference>
<dbReference type="GO" id="GO:0006413">
    <property type="term" value="P:translational initiation"/>
    <property type="evidence" value="ECO:0000318"/>
    <property type="project" value="GO_Central"/>
</dbReference>
<dbReference type="HAMAP" id="MF_03003">
    <property type="entry name" value="eIF3d"/>
    <property type="match status" value="1"/>
</dbReference>
<dbReference type="InterPro" id="IPR007783">
    <property type="entry name" value="eIF3d"/>
</dbReference>
<dbReference type="PANTHER" id="PTHR12399">
    <property type="entry name" value="EUKARYOTIC TRANSLATION INITIATION FACTOR 3 SUBUNIT 7"/>
    <property type="match status" value="1"/>
</dbReference>
<dbReference type="PANTHER" id="PTHR12399:SF0">
    <property type="entry name" value="EUKARYOTIC TRANSLATION INITIATION FACTOR 3 SUBUNIT D"/>
    <property type="match status" value="1"/>
</dbReference>
<dbReference type="Pfam" id="PF05091">
    <property type="entry name" value="eIF-3_zeta"/>
    <property type="match status" value="1"/>
</dbReference>
<dbReference type="PIRSF" id="PIRSF016281">
    <property type="entry name" value="EIF-3_zeta"/>
    <property type="match status" value="1"/>
</dbReference>
<gene>
    <name evidence="2" type="primary">eIF3d2</name>
    <name evidence="2" type="synonym">eIF3-S7-2</name>
    <name evidence="4" type="ORF">CG4810</name>
</gene>
<protein>
    <recommendedName>
        <fullName evidence="2">Eukaryotic translation initiation factor 3 subunit D-2</fullName>
        <shortName evidence="2">eIF3d-2</shortName>
    </recommendedName>
    <alternativeName>
        <fullName evidence="2">Eukaryotic translation initiation factor 3 subunit 7-2</fullName>
    </alternativeName>
</protein>
<sequence>MSNYAPFIKPYVEYNEHGWGPCEVPELDVPYQPFCKSDRLGKICDWTAMVPEKKFPSKYASTFGNNSQYAYFYEDDDSTFHLVDTTGSKATKPYQRGRYRPNMRNNVRSRGRTGRGTPNIASLGGSTAGGATASTTKYGKGRNTRNTQNMGRRFGRNAPTRIRESSVMVQSDWVSIEEIDFPRLLKLALPNIKDGKDIATCGWLEFYDKLYDRVNLRNEKPLQKMDRVVHTVTTTDDPVIRRLSRTMGNVFATDEILSTIMCCTRSNYSWDVVVEKLGTKVFLDKRYNDQFDLLTVNETSVEPPMDEEGSINSAHSLAMEATLINHNFSQQVLRIGDQEPRFMFEEPNPFEEPGVDLASIGYRYRQWDLGNDVVLIARCKHNGVIQGPNGDVQFLSIKALNEWDSKVTNSVEWRQKLDTQRGAVLASELRNNACKLARWTVEAVLAGSDQLKLGYVSRMNPRDHLRHVILGTQQFKPQEFATQINLNMDNAWGVLRCLIDLVMRQPDGKYLIMKDPNKPMIRLYDVPENAFDSDGDEEEESSDPLSNSNDN</sequence>
<reference key="1">
    <citation type="journal article" date="2000" name="Science">
        <title>The genome sequence of Drosophila melanogaster.</title>
        <authorList>
            <person name="Adams M.D."/>
            <person name="Celniker S.E."/>
            <person name="Holt R.A."/>
            <person name="Evans C.A."/>
            <person name="Gocayne J.D."/>
            <person name="Amanatides P.G."/>
            <person name="Scherer S.E."/>
            <person name="Li P.W."/>
            <person name="Hoskins R.A."/>
            <person name="Galle R.F."/>
            <person name="George R.A."/>
            <person name="Lewis S.E."/>
            <person name="Richards S."/>
            <person name="Ashburner M."/>
            <person name="Henderson S.N."/>
            <person name="Sutton G.G."/>
            <person name="Wortman J.R."/>
            <person name="Yandell M.D."/>
            <person name="Zhang Q."/>
            <person name="Chen L.X."/>
            <person name="Brandon R.C."/>
            <person name="Rogers Y.-H.C."/>
            <person name="Blazej R.G."/>
            <person name="Champe M."/>
            <person name="Pfeiffer B.D."/>
            <person name="Wan K.H."/>
            <person name="Doyle C."/>
            <person name="Baxter E.G."/>
            <person name="Helt G."/>
            <person name="Nelson C.R."/>
            <person name="Miklos G.L.G."/>
            <person name="Abril J.F."/>
            <person name="Agbayani A."/>
            <person name="An H.-J."/>
            <person name="Andrews-Pfannkoch C."/>
            <person name="Baldwin D."/>
            <person name="Ballew R.M."/>
            <person name="Basu A."/>
            <person name="Baxendale J."/>
            <person name="Bayraktaroglu L."/>
            <person name="Beasley E.M."/>
            <person name="Beeson K.Y."/>
            <person name="Benos P.V."/>
            <person name="Berman B.P."/>
            <person name="Bhandari D."/>
            <person name="Bolshakov S."/>
            <person name="Borkova D."/>
            <person name="Botchan M.R."/>
            <person name="Bouck J."/>
            <person name="Brokstein P."/>
            <person name="Brottier P."/>
            <person name="Burtis K.C."/>
            <person name="Busam D.A."/>
            <person name="Butler H."/>
            <person name="Cadieu E."/>
            <person name="Center A."/>
            <person name="Chandra I."/>
            <person name="Cherry J.M."/>
            <person name="Cawley S."/>
            <person name="Dahlke C."/>
            <person name="Davenport L.B."/>
            <person name="Davies P."/>
            <person name="de Pablos B."/>
            <person name="Delcher A."/>
            <person name="Deng Z."/>
            <person name="Mays A.D."/>
            <person name="Dew I."/>
            <person name="Dietz S.M."/>
            <person name="Dodson K."/>
            <person name="Doup L.E."/>
            <person name="Downes M."/>
            <person name="Dugan-Rocha S."/>
            <person name="Dunkov B.C."/>
            <person name="Dunn P."/>
            <person name="Durbin K.J."/>
            <person name="Evangelista C.C."/>
            <person name="Ferraz C."/>
            <person name="Ferriera S."/>
            <person name="Fleischmann W."/>
            <person name="Fosler C."/>
            <person name="Gabrielian A.E."/>
            <person name="Garg N.S."/>
            <person name="Gelbart W.M."/>
            <person name="Glasser K."/>
            <person name="Glodek A."/>
            <person name="Gong F."/>
            <person name="Gorrell J.H."/>
            <person name="Gu Z."/>
            <person name="Guan P."/>
            <person name="Harris M."/>
            <person name="Harris N.L."/>
            <person name="Harvey D.A."/>
            <person name="Heiman T.J."/>
            <person name="Hernandez J.R."/>
            <person name="Houck J."/>
            <person name="Hostin D."/>
            <person name="Houston K.A."/>
            <person name="Howland T.J."/>
            <person name="Wei M.-H."/>
            <person name="Ibegwam C."/>
            <person name="Jalali M."/>
            <person name="Kalush F."/>
            <person name="Karpen G.H."/>
            <person name="Ke Z."/>
            <person name="Kennison J.A."/>
            <person name="Ketchum K.A."/>
            <person name="Kimmel B.E."/>
            <person name="Kodira C.D."/>
            <person name="Kraft C.L."/>
            <person name="Kravitz S."/>
            <person name="Kulp D."/>
            <person name="Lai Z."/>
            <person name="Lasko P."/>
            <person name="Lei Y."/>
            <person name="Levitsky A.A."/>
            <person name="Li J.H."/>
            <person name="Li Z."/>
            <person name="Liang Y."/>
            <person name="Lin X."/>
            <person name="Liu X."/>
            <person name="Mattei B."/>
            <person name="McIntosh T.C."/>
            <person name="McLeod M.P."/>
            <person name="McPherson D."/>
            <person name="Merkulov G."/>
            <person name="Milshina N.V."/>
            <person name="Mobarry C."/>
            <person name="Morris J."/>
            <person name="Moshrefi A."/>
            <person name="Mount S.M."/>
            <person name="Moy M."/>
            <person name="Murphy B."/>
            <person name="Murphy L."/>
            <person name="Muzny D.M."/>
            <person name="Nelson D.L."/>
            <person name="Nelson D.R."/>
            <person name="Nelson K.A."/>
            <person name="Nixon K."/>
            <person name="Nusskern D.R."/>
            <person name="Pacleb J.M."/>
            <person name="Palazzolo M."/>
            <person name="Pittman G.S."/>
            <person name="Pan S."/>
            <person name="Pollard J."/>
            <person name="Puri V."/>
            <person name="Reese M.G."/>
            <person name="Reinert K."/>
            <person name="Remington K."/>
            <person name="Saunders R.D.C."/>
            <person name="Scheeler F."/>
            <person name="Shen H."/>
            <person name="Shue B.C."/>
            <person name="Siden-Kiamos I."/>
            <person name="Simpson M."/>
            <person name="Skupski M.P."/>
            <person name="Smith T.J."/>
            <person name="Spier E."/>
            <person name="Spradling A.C."/>
            <person name="Stapleton M."/>
            <person name="Strong R."/>
            <person name="Sun E."/>
            <person name="Svirskas R."/>
            <person name="Tector C."/>
            <person name="Turner R."/>
            <person name="Venter E."/>
            <person name="Wang A.H."/>
            <person name="Wang X."/>
            <person name="Wang Z.-Y."/>
            <person name="Wassarman D.A."/>
            <person name="Weinstock G.M."/>
            <person name="Weissenbach J."/>
            <person name="Williams S.M."/>
            <person name="Woodage T."/>
            <person name="Worley K.C."/>
            <person name="Wu D."/>
            <person name="Yang S."/>
            <person name="Yao Q.A."/>
            <person name="Ye J."/>
            <person name="Yeh R.-F."/>
            <person name="Zaveri J.S."/>
            <person name="Zhan M."/>
            <person name="Zhang G."/>
            <person name="Zhao Q."/>
            <person name="Zheng L."/>
            <person name="Zheng X.H."/>
            <person name="Zhong F.N."/>
            <person name="Zhong W."/>
            <person name="Zhou X."/>
            <person name="Zhu S.C."/>
            <person name="Zhu X."/>
            <person name="Smith H.O."/>
            <person name="Gibbs R.A."/>
            <person name="Myers E.W."/>
            <person name="Rubin G.M."/>
            <person name="Venter J.C."/>
        </authorList>
    </citation>
    <scope>NUCLEOTIDE SEQUENCE [LARGE SCALE GENOMIC DNA]</scope>
    <source>
        <strain>Berkeley</strain>
    </source>
</reference>
<reference key="2">
    <citation type="journal article" date="2002" name="Genome Biol.">
        <title>Annotation of the Drosophila melanogaster euchromatic genome: a systematic review.</title>
        <authorList>
            <person name="Misra S."/>
            <person name="Crosby M.A."/>
            <person name="Mungall C.J."/>
            <person name="Matthews B.B."/>
            <person name="Campbell K.S."/>
            <person name="Hradecky P."/>
            <person name="Huang Y."/>
            <person name="Kaminker J.S."/>
            <person name="Millburn G.H."/>
            <person name="Prochnik S.E."/>
            <person name="Smith C.D."/>
            <person name="Tupy J.L."/>
            <person name="Whitfield E.J."/>
            <person name="Bayraktaroglu L."/>
            <person name="Berman B.P."/>
            <person name="Bettencourt B.R."/>
            <person name="Celniker S.E."/>
            <person name="de Grey A.D.N.J."/>
            <person name="Drysdale R.A."/>
            <person name="Harris N.L."/>
            <person name="Richter J."/>
            <person name="Russo S."/>
            <person name="Schroeder A.J."/>
            <person name="Shu S.Q."/>
            <person name="Stapleton M."/>
            <person name="Yamada C."/>
            <person name="Ashburner M."/>
            <person name="Gelbart W.M."/>
            <person name="Rubin G.M."/>
            <person name="Lewis S.E."/>
        </authorList>
    </citation>
    <scope>GENOME REANNOTATION</scope>
    <source>
        <strain>Berkeley</strain>
    </source>
</reference>
<reference key="3">
    <citation type="journal article" date="2002" name="Genome Biol.">
        <title>A Drosophila full-length cDNA resource.</title>
        <authorList>
            <person name="Stapleton M."/>
            <person name="Carlson J.W."/>
            <person name="Brokstein P."/>
            <person name="Yu C."/>
            <person name="Champe M."/>
            <person name="George R.A."/>
            <person name="Guarin H."/>
            <person name="Kronmiller B."/>
            <person name="Pacleb J.M."/>
            <person name="Park S."/>
            <person name="Wan K.H."/>
            <person name="Rubin G.M."/>
            <person name="Celniker S.E."/>
        </authorList>
    </citation>
    <scope>NUCLEOTIDE SEQUENCE [LARGE SCALE MRNA]</scope>
    <source>
        <strain>Berkeley</strain>
        <tissue>Head</tissue>
    </source>
</reference>